<proteinExistence type="inferred from homology"/>
<organism>
    <name type="scientific">Salmonella enteritidis PT4 (strain P125109)</name>
    <dbReference type="NCBI Taxonomy" id="550537"/>
    <lineage>
        <taxon>Bacteria</taxon>
        <taxon>Pseudomonadati</taxon>
        <taxon>Pseudomonadota</taxon>
        <taxon>Gammaproteobacteria</taxon>
        <taxon>Enterobacterales</taxon>
        <taxon>Enterobacteriaceae</taxon>
        <taxon>Salmonella</taxon>
    </lineage>
</organism>
<protein>
    <recommendedName>
        <fullName evidence="1">Homoserine kinase</fullName>
        <shortName evidence="1">HK</shortName>
        <shortName evidence="1">HSK</shortName>
        <ecNumber evidence="1">2.7.1.39</ecNumber>
    </recommendedName>
</protein>
<evidence type="ECO:0000255" key="1">
    <source>
        <dbReference type="HAMAP-Rule" id="MF_00384"/>
    </source>
</evidence>
<accession>B5R5H5</accession>
<keyword id="KW-0028">Amino-acid biosynthesis</keyword>
<keyword id="KW-0067">ATP-binding</keyword>
<keyword id="KW-0963">Cytoplasm</keyword>
<keyword id="KW-0418">Kinase</keyword>
<keyword id="KW-0547">Nucleotide-binding</keyword>
<keyword id="KW-0791">Threonine biosynthesis</keyword>
<keyword id="KW-0808">Transferase</keyword>
<reference key="1">
    <citation type="journal article" date="2008" name="Genome Res.">
        <title>Comparative genome analysis of Salmonella enteritidis PT4 and Salmonella gallinarum 287/91 provides insights into evolutionary and host adaptation pathways.</title>
        <authorList>
            <person name="Thomson N.R."/>
            <person name="Clayton D.J."/>
            <person name="Windhorst D."/>
            <person name="Vernikos G."/>
            <person name="Davidson S."/>
            <person name="Churcher C."/>
            <person name="Quail M.A."/>
            <person name="Stevens M."/>
            <person name="Jones M.A."/>
            <person name="Watson M."/>
            <person name="Barron A."/>
            <person name="Layton A."/>
            <person name="Pickard D."/>
            <person name="Kingsley R.A."/>
            <person name="Bignell A."/>
            <person name="Clark L."/>
            <person name="Harris B."/>
            <person name="Ormond D."/>
            <person name="Abdellah Z."/>
            <person name="Brooks K."/>
            <person name="Cherevach I."/>
            <person name="Chillingworth T."/>
            <person name="Woodward J."/>
            <person name="Norberczak H."/>
            <person name="Lord A."/>
            <person name="Arrowsmith C."/>
            <person name="Jagels K."/>
            <person name="Moule S."/>
            <person name="Mungall K."/>
            <person name="Saunders M."/>
            <person name="Whitehead S."/>
            <person name="Chabalgoity J.A."/>
            <person name="Maskell D."/>
            <person name="Humphreys T."/>
            <person name="Roberts M."/>
            <person name="Barrow P.A."/>
            <person name="Dougan G."/>
            <person name="Parkhill J."/>
        </authorList>
    </citation>
    <scope>NUCLEOTIDE SEQUENCE [LARGE SCALE GENOMIC DNA]</scope>
    <source>
        <strain>P125109</strain>
    </source>
</reference>
<feature type="chain" id="PRO_1000122438" description="Homoserine kinase">
    <location>
        <begin position="1"/>
        <end position="309"/>
    </location>
</feature>
<feature type="binding site" evidence="1">
    <location>
        <begin position="91"/>
        <end position="101"/>
    </location>
    <ligand>
        <name>ATP</name>
        <dbReference type="ChEBI" id="CHEBI:30616"/>
    </ligand>
</feature>
<gene>
    <name evidence="1" type="primary">thrB</name>
    <name type="ordered locus">SEN0002</name>
</gene>
<comment type="function">
    <text evidence="1">Catalyzes the ATP-dependent phosphorylation of L-homoserine to L-homoserine phosphate.</text>
</comment>
<comment type="catalytic activity">
    <reaction evidence="1">
        <text>L-homoserine + ATP = O-phospho-L-homoserine + ADP + H(+)</text>
        <dbReference type="Rhea" id="RHEA:13985"/>
        <dbReference type="ChEBI" id="CHEBI:15378"/>
        <dbReference type="ChEBI" id="CHEBI:30616"/>
        <dbReference type="ChEBI" id="CHEBI:57476"/>
        <dbReference type="ChEBI" id="CHEBI:57590"/>
        <dbReference type="ChEBI" id="CHEBI:456216"/>
        <dbReference type="EC" id="2.7.1.39"/>
    </reaction>
</comment>
<comment type="pathway">
    <text evidence="1">Amino-acid biosynthesis; L-threonine biosynthesis; L-threonine from L-aspartate: step 4/5.</text>
</comment>
<comment type="subcellular location">
    <subcellularLocation>
        <location evidence="1">Cytoplasm</location>
    </subcellularLocation>
</comment>
<comment type="similarity">
    <text evidence="1">Belongs to the GHMP kinase family. Homoserine kinase subfamily.</text>
</comment>
<sequence>MVKVYAPASSANMSVGFDVLGAAVTPVDGTLLGDVVSVEAADHFRLHNLGRFADKLPPEPRENIVYQCWERFCQALGKTIPVAMTLEKNMPIGSGLGSSACSVVAALVAMNEHCGKPLNDTRLLALMGELEGRISGSIHYDNVAPCFLGGMQLMIEENGIISQQVPGFDEWLWVLAYPGIKVSTAEARAILPAQYRRQDCIAHGRHLAGFIHACYSRQPQLAAALMKDVIAEPYRARLLPGFSQARQAVSEIGALASGISGSGPTLFALCDKPETAQRVADWLSKHYLQNQEGFVHICRLDTAGARVVG</sequence>
<dbReference type="EC" id="2.7.1.39" evidence="1"/>
<dbReference type="EMBL" id="AM933172">
    <property type="protein sequence ID" value="CAR31593.1"/>
    <property type="molecule type" value="Genomic_DNA"/>
</dbReference>
<dbReference type="RefSeq" id="WP_000241685.1">
    <property type="nucleotide sequence ID" value="NC_011294.1"/>
</dbReference>
<dbReference type="SMR" id="B5R5H5"/>
<dbReference type="KEGG" id="set:SEN0002"/>
<dbReference type="HOGENOM" id="CLU_041243_1_1_6"/>
<dbReference type="UniPathway" id="UPA00050">
    <property type="reaction ID" value="UER00064"/>
</dbReference>
<dbReference type="Proteomes" id="UP000000613">
    <property type="component" value="Chromosome"/>
</dbReference>
<dbReference type="GO" id="GO:0005737">
    <property type="term" value="C:cytoplasm"/>
    <property type="evidence" value="ECO:0007669"/>
    <property type="project" value="UniProtKB-SubCell"/>
</dbReference>
<dbReference type="GO" id="GO:0005524">
    <property type="term" value="F:ATP binding"/>
    <property type="evidence" value="ECO:0007669"/>
    <property type="project" value="UniProtKB-UniRule"/>
</dbReference>
<dbReference type="GO" id="GO:0004413">
    <property type="term" value="F:homoserine kinase activity"/>
    <property type="evidence" value="ECO:0007669"/>
    <property type="project" value="UniProtKB-UniRule"/>
</dbReference>
<dbReference type="GO" id="GO:0009088">
    <property type="term" value="P:threonine biosynthetic process"/>
    <property type="evidence" value="ECO:0007669"/>
    <property type="project" value="UniProtKB-UniRule"/>
</dbReference>
<dbReference type="FunFam" id="3.30.230.10:FF:000020">
    <property type="entry name" value="Homoserine kinase"/>
    <property type="match status" value="1"/>
</dbReference>
<dbReference type="FunFam" id="3.30.70.890:FF:000002">
    <property type="entry name" value="Homoserine kinase"/>
    <property type="match status" value="1"/>
</dbReference>
<dbReference type="Gene3D" id="3.30.230.10">
    <property type="match status" value="1"/>
</dbReference>
<dbReference type="Gene3D" id="3.30.70.890">
    <property type="entry name" value="GHMP kinase, C-terminal domain"/>
    <property type="match status" value="1"/>
</dbReference>
<dbReference type="HAMAP" id="MF_00384">
    <property type="entry name" value="Homoser_kinase"/>
    <property type="match status" value="1"/>
</dbReference>
<dbReference type="InterPro" id="IPR013750">
    <property type="entry name" value="GHMP_kinase_C_dom"/>
</dbReference>
<dbReference type="InterPro" id="IPR036554">
    <property type="entry name" value="GHMP_kinase_C_sf"/>
</dbReference>
<dbReference type="InterPro" id="IPR006204">
    <property type="entry name" value="GHMP_kinase_N_dom"/>
</dbReference>
<dbReference type="InterPro" id="IPR006203">
    <property type="entry name" value="GHMP_knse_ATP-bd_CS"/>
</dbReference>
<dbReference type="InterPro" id="IPR000870">
    <property type="entry name" value="Homoserine_kinase"/>
</dbReference>
<dbReference type="InterPro" id="IPR020568">
    <property type="entry name" value="Ribosomal_Su5_D2-typ_SF"/>
</dbReference>
<dbReference type="InterPro" id="IPR014721">
    <property type="entry name" value="Ribsml_uS5_D2-typ_fold_subgr"/>
</dbReference>
<dbReference type="NCBIfam" id="NF002288">
    <property type="entry name" value="PRK01212.1-4"/>
    <property type="match status" value="1"/>
</dbReference>
<dbReference type="NCBIfam" id="TIGR00191">
    <property type="entry name" value="thrB"/>
    <property type="match status" value="1"/>
</dbReference>
<dbReference type="PANTHER" id="PTHR20861:SF1">
    <property type="entry name" value="HOMOSERINE KINASE"/>
    <property type="match status" value="1"/>
</dbReference>
<dbReference type="PANTHER" id="PTHR20861">
    <property type="entry name" value="HOMOSERINE/4-DIPHOSPHOCYTIDYL-2-C-METHYL-D-ERYTHRITOL KINASE"/>
    <property type="match status" value="1"/>
</dbReference>
<dbReference type="Pfam" id="PF08544">
    <property type="entry name" value="GHMP_kinases_C"/>
    <property type="match status" value="1"/>
</dbReference>
<dbReference type="Pfam" id="PF00288">
    <property type="entry name" value="GHMP_kinases_N"/>
    <property type="match status" value="1"/>
</dbReference>
<dbReference type="PIRSF" id="PIRSF000676">
    <property type="entry name" value="Homoser_kin"/>
    <property type="match status" value="1"/>
</dbReference>
<dbReference type="PRINTS" id="PR00958">
    <property type="entry name" value="HOMSERKINASE"/>
</dbReference>
<dbReference type="SUPFAM" id="SSF55060">
    <property type="entry name" value="GHMP Kinase, C-terminal domain"/>
    <property type="match status" value="1"/>
</dbReference>
<dbReference type="SUPFAM" id="SSF54211">
    <property type="entry name" value="Ribosomal protein S5 domain 2-like"/>
    <property type="match status" value="1"/>
</dbReference>
<dbReference type="PROSITE" id="PS00627">
    <property type="entry name" value="GHMP_KINASES_ATP"/>
    <property type="match status" value="1"/>
</dbReference>
<name>KHSE_SALEP</name>